<comment type="function">
    <text evidence="1">Catalyzes the conversion of dihydroorotate to orotate with quinone as electron acceptor.</text>
</comment>
<comment type="catalytic activity">
    <reaction evidence="1">
        <text>(S)-dihydroorotate + a quinone = orotate + a quinol</text>
        <dbReference type="Rhea" id="RHEA:30187"/>
        <dbReference type="ChEBI" id="CHEBI:24646"/>
        <dbReference type="ChEBI" id="CHEBI:30839"/>
        <dbReference type="ChEBI" id="CHEBI:30864"/>
        <dbReference type="ChEBI" id="CHEBI:132124"/>
        <dbReference type="EC" id="1.3.5.2"/>
    </reaction>
</comment>
<comment type="cofactor">
    <cofactor evidence="1">
        <name>FMN</name>
        <dbReference type="ChEBI" id="CHEBI:58210"/>
    </cofactor>
    <text evidence="1">Binds 1 FMN per subunit.</text>
</comment>
<comment type="pathway">
    <text evidence="1">Pyrimidine metabolism; UMP biosynthesis via de novo pathway; orotate from (S)-dihydroorotate (quinone route): step 1/1.</text>
</comment>
<comment type="subunit">
    <text evidence="1">Monomer.</text>
</comment>
<comment type="subcellular location">
    <subcellularLocation>
        <location evidence="1">Cell membrane</location>
        <topology evidence="1">Peripheral membrane protein</topology>
    </subcellularLocation>
</comment>
<comment type="similarity">
    <text evidence="1">Belongs to the dihydroorotate dehydrogenase family. Type 2 subfamily.</text>
</comment>
<organism>
    <name type="scientific">Klebsiella pneumoniae (strain 342)</name>
    <dbReference type="NCBI Taxonomy" id="507522"/>
    <lineage>
        <taxon>Bacteria</taxon>
        <taxon>Pseudomonadati</taxon>
        <taxon>Pseudomonadota</taxon>
        <taxon>Gammaproteobacteria</taxon>
        <taxon>Enterobacterales</taxon>
        <taxon>Enterobacteriaceae</taxon>
        <taxon>Klebsiella/Raoultella group</taxon>
        <taxon>Klebsiella</taxon>
        <taxon>Klebsiella pneumoniae complex</taxon>
    </lineage>
</organism>
<gene>
    <name evidence="1" type="primary">pyrD</name>
    <name type="ordered locus">KPK_3594</name>
</gene>
<dbReference type="EC" id="1.3.5.2" evidence="1"/>
<dbReference type="EMBL" id="CP000964">
    <property type="protein sequence ID" value="ACI09604.1"/>
    <property type="molecule type" value="Genomic_DNA"/>
</dbReference>
<dbReference type="SMR" id="B5XY59"/>
<dbReference type="KEGG" id="kpe:KPK_3594"/>
<dbReference type="HOGENOM" id="CLU_013640_2_0_6"/>
<dbReference type="UniPathway" id="UPA00070">
    <property type="reaction ID" value="UER00946"/>
</dbReference>
<dbReference type="Proteomes" id="UP000001734">
    <property type="component" value="Chromosome"/>
</dbReference>
<dbReference type="GO" id="GO:0005737">
    <property type="term" value="C:cytoplasm"/>
    <property type="evidence" value="ECO:0007669"/>
    <property type="project" value="InterPro"/>
</dbReference>
<dbReference type="GO" id="GO:0005886">
    <property type="term" value="C:plasma membrane"/>
    <property type="evidence" value="ECO:0007669"/>
    <property type="project" value="UniProtKB-SubCell"/>
</dbReference>
<dbReference type="GO" id="GO:0106430">
    <property type="term" value="F:dihydroorotate dehydrogenase (quinone) activity"/>
    <property type="evidence" value="ECO:0007669"/>
    <property type="project" value="UniProtKB-EC"/>
</dbReference>
<dbReference type="GO" id="GO:0006207">
    <property type="term" value="P:'de novo' pyrimidine nucleobase biosynthetic process"/>
    <property type="evidence" value="ECO:0007669"/>
    <property type="project" value="InterPro"/>
</dbReference>
<dbReference type="GO" id="GO:0044205">
    <property type="term" value="P:'de novo' UMP biosynthetic process"/>
    <property type="evidence" value="ECO:0007669"/>
    <property type="project" value="UniProtKB-UniRule"/>
</dbReference>
<dbReference type="CDD" id="cd04738">
    <property type="entry name" value="DHOD_2_like"/>
    <property type="match status" value="1"/>
</dbReference>
<dbReference type="FunFam" id="3.20.20.70:FF:000028">
    <property type="entry name" value="Dihydroorotate dehydrogenase (quinone)"/>
    <property type="match status" value="1"/>
</dbReference>
<dbReference type="Gene3D" id="3.20.20.70">
    <property type="entry name" value="Aldolase class I"/>
    <property type="match status" value="1"/>
</dbReference>
<dbReference type="HAMAP" id="MF_00225">
    <property type="entry name" value="DHO_dh_type2"/>
    <property type="match status" value="1"/>
</dbReference>
<dbReference type="InterPro" id="IPR013785">
    <property type="entry name" value="Aldolase_TIM"/>
</dbReference>
<dbReference type="InterPro" id="IPR050074">
    <property type="entry name" value="DHO_dehydrogenase"/>
</dbReference>
<dbReference type="InterPro" id="IPR012135">
    <property type="entry name" value="Dihydroorotate_DH_1_2"/>
</dbReference>
<dbReference type="InterPro" id="IPR005719">
    <property type="entry name" value="Dihydroorotate_DH_2"/>
</dbReference>
<dbReference type="InterPro" id="IPR005720">
    <property type="entry name" value="Dihydroorotate_DH_cat"/>
</dbReference>
<dbReference type="InterPro" id="IPR001295">
    <property type="entry name" value="Dihydroorotate_DH_CS"/>
</dbReference>
<dbReference type="NCBIfam" id="NF003644">
    <property type="entry name" value="PRK05286.1-1"/>
    <property type="match status" value="1"/>
</dbReference>
<dbReference type="NCBIfam" id="NF003645">
    <property type="entry name" value="PRK05286.1-2"/>
    <property type="match status" value="1"/>
</dbReference>
<dbReference type="NCBIfam" id="NF003646">
    <property type="entry name" value="PRK05286.1-4"/>
    <property type="match status" value="1"/>
</dbReference>
<dbReference type="NCBIfam" id="NF003652">
    <property type="entry name" value="PRK05286.2-5"/>
    <property type="match status" value="1"/>
</dbReference>
<dbReference type="NCBIfam" id="TIGR01036">
    <property type="entry name" value="pyrD_sub2"/>
    <property type="match status" value="1"/>
</dbReference>
<dbReference type="PANTHER" id="PTHR48109:SF4">
    <property type="entry name" value="DIHYDROOROTATE DEHYDROGENASE (QUINONE), MITOCHONDRIAL"/>
    <property type="match status" value="1"/>
</dbReference>
<dbReference type="PANTHER" id="PTHR48109">
    <property type="entry name" value="DIHYDROOROTATE DEHYDROGENASE (QUINONE), MITOCHONDRIAL-RELATED"/>
    <property type="match status" value="1"/>
</dbReference>
<dbReference type="Pfam" id="PF01180">
    <property type="entry name" value="DHO_dh"/>
    <property type="match status" value="1"/>
</dbReference>
<dbReference type="PIRSF" id="PIRSF000164">
    <property type="entry name" value="DHO_oxidase"/>
    <property type="match status" value="1"/>
</dbReference>
<dbReference type="SUPFAM" id="SSF51395">
    <property type="entry name" value="FMN-linked oxidoreductases"/>
    <property type="match status" value="1"/>
</dbReference>
<dbReference type="PROSITE" id="PS00911">
    <property type="entry name" value="DHODEHASE_1"/>
    <property type="match status" value="1"/>
</dbReference>
<dbReference type="PROSITE" id="PS00912">
    <property type="entry name" value="DHODEHASE_2"/>
    <property type="match status" value="1"/>
</dbReference>
<proteinExistence type="inferred from homology"/>
<feature type="chain" id="PRO_1000100269" description="Dihydroorotate dehydrogenase (quinone)">
    <location>
        <begin position="1"/>
        <end position="336"/>
    </location>
</feature>
<feature type="active site" description="Nucleophile" evidence="1">
    <location>
        <position position="175"/>
    </location>
</feature>
<feature type="binding site" evidence="1">
    <location>
        <begin position="62"/>
        <end position="66"/>
    </location>
    <ligand>
        <name>FMN</name>
        <dbReference type="ChEBI" id="CHEBI:58210"/>
    </ligand>
</feature>
<feature type="binding site" evidence="1">
    <location>
        <position position="66"/>
    </location>
    <ligand>
        <name>substrate</name>
    </ligand>
</feature>
<feature type="binding site" evidence="1">
    <location>
        <position position="86"/>
    </location>
    <ligand>
        <name>FMN</name>
        <dbReference type="ChEBI" id="CHEBI:58210"/>
    </ligand>
</feature>
<feature type="binding site" evidence="1">
    <location>
        <begin position="111"/>
        <end position="115"/>
    </location>
    <ligand>
        <name>substrate</name>
    </ligand>
</feature>
<feature type="binding site" evidence="1">
    <location>
        <position position="139"/>
    </location>
    <ligand>
        <name>FMN</name>
        <dbReference type="ChEBI" id="CHEBI:58210"/>
    </ligand>
</feature>
<feature type="binding site" evidence="1">
    <location>
        <position position="172"/>
    </location>
    <ligand>
        <name>FMN</name>
        <dbReference type="ChEBI" id="CHEBI:58210"/>
    </ligand>
</feature>
<feature type="binding site" evidence="1">
    <location>
        <position position="172"/>
    </location>
    <ligand>
        <name>substrate</name>
    </ligand>
</feature>
<feature type="binding site" evidence="1">
    <location>
        <position position="177"/>
    </location>
    <ligand>
        <name>substrate</name>
    </ligand>
</feature>
<feature type="binding site" evidence="1">
    <location>
        <position position="217"/>
    </location>
    <ligand>
        <name>FMN</name>
        <dbReference type="ChEBI" id="CHEBI:58210"/>
    </ligand>
</feature>
<feature type="binding site" evidence="1">
    <location>
        <position position="245"/>
    </location>
    <ligand>
        <name>FMN</name>
        <dbReference type="ChEBI" id="CHEBI:58210"/>
    </ligand>
</feature>
<feature type="binding site" evidence="1">
    <location>
        <begin position="246"/>
        <end position="247"/>
    </location>
    <ligand>
        <name>substrate</name>
    </ligand>
</feature>
<feature type="binding site" evidence="1">
    <location>
        <position position="268"/>
    </location>
    <ligand>
        <name>FMN</name>
        <dbReference type="ChEBI" id="CHEBI:58210"/>
    </ligand>
</feature>
<feature type="binding site" evidence="1">
    <location>
        <position position="297"/>
    </location>
    <ligand>
        <name>FMN</name>
        <dbReference type="ChEBI" id="CHEBI:58210"/>
    </ligand>
</feature>
<feature type="binding site" evidence="1">
    <location>
        <begin position="318"/>
        <end position="319"/>
    </location>
    <ligand>
        <name>FMN</name>
        <dbReference type="ChEBI" id="CHEBI:58210"/>
    </ligand>
</feature>
<accession>B5XY59</accession>
<sequence>MYYPFVRKALFQLDPERAHEVTFQQLRRVTGTPLEMLVRQKVPARPVTCMGLTFKNPLGLAAGLDKNGECIDALGAMGFGSIEIGTVTPRPQPGNDKPRIFRLVDAEGLINRMGFNNHGVDNLVENVKKAHFDGVLGINIGKNKDTPVEHGKDDYLICMEKVYPYAGYIAINISSPNTPGLRTLQYGEALDDLLSGIKNKQLELQQKHQKYVPVAVKIAPDLLPEELIQVADSLVRHNIDGVIATNTTLDRSLVQGMKHCDETGGLSGRPLQLKSTEIIRMLSAELNGRLPIIGVGGIDSVIAAREKIAAGASLVQIYSGFIFKGPPLIKEIVTHI</sequence>
<reference key="1">
    <citation type="journal article" date="2008" name="PLoS Genet.">
        <title>Complete genome sequence of the N2-fixing broad host range endophyte Klebsiella pneumoniae 342 and virulence predictions verified in mice.</title>
        <authorList>
            <person name="Fouts D.E."/>
            <person name="Tyler H.L."/>
            <person name="DeBoy R.T."/>
            <person name="Daugherty S."/>
            <person name="Ren Q."/>
            <person name="Badger J.H."/>
            <person name="Durkin A.S."/>
            <person name="Huot H."/>
            <person name="Shrivastava S."/>
            <person name="Kothari S."/>
            <person name="Dodson R.J."/>
            <person name="Mohamoud Y."/>
            <person name="Khouri H."/>
            <person name="Roesch L.F.W."/>
            <person name="Krogfelt K.A."/>
            <person name="Struve C."/>
            <person name="Triplett E.W."/>
            <person name="Methe B.A."/>
        </authorList>
    </citation>
    <scope>NUCLEOTIDE SEQUENCE [LARGE SCALE GENOMIC DNA]</scope>
    <source>
        <strain>342</strain>
    </source>
</reference>
<keyword id="KW-1003">Cell membrane</keyword>
<keyword id="KW-0285">Flavoprotein</keyword>
<keyword id="KW-0288">FMN</keyword>
<keyword id="KW-0472">Membrane</keyword>
<keyword id="KW-0560">Oxidoreductase</keyword>
<keyword id="KW-0665">Pyrimidine biosynthesis</keyword>
<protein>
    <recommendedName>
        <fullName evidence="1">Dihydroorotate dehydrogenase (quinone)</fullName>
        <ecNumber evidence="1">1.3.5.2</ecNumber>
    </recommendedName>
    <alternativeName>
        <fullName evidence="1">DHOdehase</fullName>
        <shortName evidence="1">DHOD</shortName>
        <shortName evidence="1">DHODase</shortName>
    </alternativeName>
    <alternativeName>
        <fullName evidence="1">Dihydroorotate oxidase</fullName>
    </alternativeName>
</protein>
<evidence type="ECO:0000255" key="1">
    <source>
        <dbReference type="HAMAP-Rule" id="MF_00225"/>
    </source>
</evidence>
<name>PYRD_KLEP3</name>